<feature type="chain" id="PRO_1000051948" description="Large ribosomal subunit protein uL2">
    <location>
        <begin position="1"/>
        <end position="273"/>
    </location>
</feature>
<feature type="region of interest" description="Disordered" evidence="2">
    <location>
        <begin position="228"/>
        <end position="273"/>
    </location>
</feature>
<feature type="compositionally biased region" description="Basic residues" evidence="2">
    <location>
        <begin position="254"/>
        <end position="273"/>
    </location>
</feature>
<sequence length="273" mass="30196">MALKNFNPITPSLRELVQVDKTSLWKGRPLKSLTKGISKTGGRNNQGRITSWHRGGGHKKLYRIIDFKRNKIDVSAIVERIEYDPNRTAFIALIKYEDGEYSYILAPQKLSVGDRVISSQDADIKIGNCLPLKCIPIGTTLHNVEMKVGKGGQIARSAGTSVDLVGKDSGYAQIKLRSGEFRLVPLDCKATIGSISNPDQKNINLGKAGRNRWLGWRPHVRGVAMNPVDHPHGGGEGKTSGGRHPVTPWGFPTKGKKTRKNKRTSKFIVKKRK</sequence>
<reference key="1">
    <citation type="submission" date="2007-09" db="EMBL/GenBank/DDBJ databases">
        <title>Complete genome sequence of Rickettsia rickettsii.</title>
        <authorList>
            <person name="Madan A."/>
            <person name="Fahey J."/>
            <person name="Helton E."/>
            <person name="Ketteman M."/>
            <person name="Madan A."/>
            <person name="Rodrigues S."/>
            <person name="Sanchez A."/>
            <person name="Dasch G."/>
            <person name="Eremeeva M."/>
        </authorList>
    </citation>
    <scope>NUCLEOTIDE SEQUENCE [LARGE SCALE GENOMIC DNA]</scope>
    <source>
        <strain>Sheila Smith</strain>
    </source>
</reference>
<dbReference type="EMBL" id="CP000848">
    <property type="protein sequence ID" value="ABV76591.1"/>
    <property type="molecule type" value="Genomic_DNA"/>
</dbReference>
<dbReference type="RefSeq" id="WP_012151149.1">
    <property type="nucleotide sequence ID" value="NZ_CP121767.1"/>
</dbReference>
<dbReference type="SMR" id="A8GT66"/>
<dbReference type="GeneID" id="79937667"/>
<dbReference type="KEGG" id="rri:A1G_05540"/>
<dbReference type="HOGENOM" id="CLU_036235_2_1_5"/>
<dbReference type="Proteomes" id="UP000006832">
    <property type="component" value="Chromosome"/>
</dbReference>
<dbReference type="GO" id="GO:0015934">
    <property type="term" value="C:large ribosomal subunit"/>
    <property type="evidence" value="ECO:0007669"/>
    <property type="project" value="InterPro"/>
</dbReference>
<dbReference type="GO" id="GO:0019843">
    <property type="term" value="F:rRNA binding"/>
    <property type="evidence" value="ECO:0007669"/>
    <property type="project" value="UniProtKB-UniRule"/>
</dbReference>
<dbReference type="GO" id="GO:0003735">
    <property type="term" value="F:structural constituent of ribosome"/>
    <property type="evidence" value="ECO:0007669"/>
    <property type="project" value="InterPro"/>
</dbReference>
<dbReference type="GO" id="GO:0016740">
    <property type="term" value="F:transferase activity"/>
    <property type="evidence" value="ECO:0007669"/>
    <property type="project" value="InterPro"/>
</dbReference>
<dbReference type="GO" id="GO:0006412">
    <property type="term" value="P:translation"/>
    <property type="evidence" value="ECO:0007669"/>
    <property type="project" value="UniProtKB-UniRule"/>
</dbReference>
<dbReference type="FunFam" id="2.30.30.30:FF:000001">
    <property type="entry name" value="50S ribosomal protein L2"/>
    <property type="match status" value="1"/>
</dbReference>
<dbReference type="FunFam" id="2.40.50.140:FF:000003">
    <property type="entry name" value="50S ribosomal protein L2"/>
    <property type="match status" value="1"/>
</dbReference>
<dbReference type="FunFam" id="4.10.950.10:FF:000001">
    <property type="entry name" value="50S ribosomal protein L2"/>
    <property type="match status" value="1"/>
</dbReference>
<dbReference type="Gene3D" id="2.30.30.30">
    <property type="match status" value="1"/>
</dbReference>
<dbReference type="Gene3D" id="2.40.50.140">
    <property type="entry name" value="Nucleic acid-binding proteins"/>
    <property type="match status" value="1"/>
</dbReference>
<dbReference type="Gene3D" id="4.10.950.10">
    <property type="entry name" value="Ribosomal protein L2, domain 3"/>
    <property type="match status" value="1"/>
</dbReference>
<dbReference type="HAMAP" id="MF_01320_B">
    <property type="entry name" value="Ribosomal_uL2_B"/>
    <property type="match status" value="1"/>
</dbReference>
<dbReference type="InterPro" id="IPR012340">
    <property type="entry name" value="NA-bd_OB-fold"/>
</dbReference>
<dbReference type="InterPro" id="IPR014722">
    <property type="entry name" value="Rib_uL2_dom2"/>
</dbReference>
<dbReference type="InterPro" id="IPR002171">
    <property type="entry name" value="Ribosomal_uL2"/>
</dbReference>
<dbReference type="InterPro" id="IPR005880">
    <property type="entry name" value="Ribosomal_uL2_bac/org-type"/>
</dbReference>
<dbReference type="InterPro" id="IPR022669">
    <property type="entry name" value="Ribosomal_uL2_C"/>
</dbReference>
<dbReference type="InterPro" id="IPR022671">
    <property type="entry name" value="Ribosomal_uL2_CS"/>
</dbReference>
<dbReference type="InterPro" id="IPR014726">
    <property type="entry name" value="Ribosomal_uL2_dom3"/>
</dbReference>
<dbReference type="InterPro" id="IPR022666">
    <property type="entry name" value="Ribosomal_uL2_RNA-bd_dom"/>
</dbReference>
<dbReference type="InterPro" id="IPR008991">
    <property type="entry name" value="Translation_prot_SH3-like_sf"/>
</dbReference>
<dbReference type="NCBIfam" id="TIGR01171">
    <property type="entry name" value="rplB_bact"/>
    <property type="match status" value="1"/>
</dbReference>
<dbReference type="PANTHER" id="PTHR13691:SF5">
    <property type="entry name" value="LARGE RIBOSOMAL SUBUNIT PROTEIN UL2M"/>
    <property type="match status" value="1"/>
</dbReference>
<dbReference type="PANTHER" id="PTHR13691">
    <property type="entry name" value="RIBOSOMAL PROTEIN L2"/>
    <property type="match status" value="1"/>
</dbReference>
<dbReference type="Pfam" id="PF00181">
    <property type="entry name" value="Ribosomal_L2"/>
    <property type="match status" value="1"/>
</dbReference>
<dbReference type="Pfam" id="PF03947">
    <property type="entry name" value="Ribosomal_L2_C"/>
    <property type="match status" value="1"/>
</dbReference>
<dbReference type="PIRSF" id="PIRSF002158">
    <property type="entry name" value="Ribosomal_L2"/>
    <property type="match status" value="1"/>
</dbReference>
<dbReference type="SMART" id="SM01383">
    <property type="entry name" value="Ribosomal_L2"/>
    <property type="match status" value="1"/>
</dbReference>
<dbReference type="SMART" id="SM01382">
    <property type="entry name" value="Ribosomal_L2_C"/>
    <property type="match status" value="1"/>
</dbReference>
<dbReference type="SUPFAM" id="SSF50249">
    <property type="entry name" value="Nucleic acid-binding proteins"/>
    <property type="match status" value="1"/>
</dbReference>
<dbReference type="SUPFAM" id="SSF50104">
    <property type="entry name" value="Translation proteins SH3-like domain"/>
    <property type="match status" value="1"/>
</dbReference>
<dbReference type="PROSITE" id="PS00467">
    <property type="entry name" value="RIBOSOMAL_L2"/>
    <property type="match status" value="1"/>
</dbReference>
<name>RL2_RICRS</name>
<accession>A8GT66</accession>
<protein>
    <recommendedName>
        <fullName evidence="1">Large ribosomal subunit protein uL2</fullName>
    </recommendedName>
    <alternativeName>
        <fullName evidence="3">50S ribosomal protein L2</fullName>
    </alternativeName>
</protein>
<comment type="function">
    <text evidence="1">One of the primary rRNA binding proteins. Required for association of the 30S and 50S subunits to form the 70S ribosome, for tRNA binding and peptide bond formation. It has been suggested to have peptidyltransferase activity; this is somewhat controversial. Makes several contacts with the 16S rRNA in the 70S ribosome.</text>
</comment>
<comment type="subunit">
    <text evidence="1">Part of the 50S ribosomal subunit. Forms a bridge to the 30S subunit in the 70S ribosome.</text>
</comment>
<comment type="similarity">
    <text evidence="1">Belongs to the universal ribosomal protein uL2 family.</text>
</comment>
<organism>
    <name type="scientific">Rickettsia rickettsii (strain Sheila Smith)</name>
    <dbReference type="NCBI Taxonomy" id="392021"/>
    <lineage>
        <taxon>Bacteria</taxon>
        <taxon>Pseudomonadati</taxon>
        <taxon>Pseudomonadota</taxon>
        <taxon>Alphaproteobacteria</taxon>
        <taxon>Rickettsiales</taxon>
        <taxon>Rickettsiaceae</taxon>
        <taxon>Rickettsieae</taxon>
        <taxon>Rickettsia</taxon>
        <taxon>spotted fever group</taxon>
    </lineage>
</organism>
<proteinExistence type="inferred from homology"/>
<keyword id="KW-0687">Ribonucleoprotein</keyword>
<keyword id="KW-0689">Ribosomal protein</keyword>
<keyword id="KW-0694">RNA-binding</keyword>
<keyword id="KW-0699">rRNA-binding</keyword>
<gene>
    <name evidence="1" type="primary">rplB</name>
    <name type="ordered locus">A1G_05540</name>
</gene>
<evidence type="ECO:0000255" key="1">
    <source>
        <dbReference type="HAMAP-Rule" id="MF_01320"/>
    </source>
</evidence>
<evidence type="ECO:0000256" key="2">
    <source>
        <dbReference type="SAM" id="MobiDB-lite"/>
    </source>
</evidence>
<evidence type="ECO:0000305" key="3"/>